<sequence length="199" mass="22205">MKLVLASASPRRREILKNITEDFIVVASDFDESLIEISRDIQSYVMVLAESKAKSTLCRIESEDFYKDEDEVFIIGCDTVVSIDGKILGKPKDEKEALDMLSELSGRTHEVYSGLAVLDAKKNKIIKDFQCTEVKFSEISYETILKYIACGEYADKAGAYGIQGKASVFVEEIKGSYYNVVGLPINKLYKILLGMGVNL</sequence>
<proteinExistence type="inferred from homology"/>
<keyword id="KW-0963">Cytoplasm</keyword>
<keyword id="KW-0378">Hydrolase</keyword>
<keyword id="KW-0546">Nucleotide metabolism</keyword>
<keyword id="KW-1185">Reference proteome</keyword>
<feature type="chain" id="PRO_0000123014" description="dTTP/UTP pyrophosphatase">
    <location>
        <begin position="1"/>
        <end position="199"/>
    </location>
</feature>
<feature type="active site" description="Proton acceptor" evidence="1">
    <location>
        <position position="78"/>
    </location>
</feature>
<feature type="site" description="Important for substrate specificity" evidence="1">
    <location>
        <position position="11"/>
    </location>
</feature>
<feature type="site" description="Important for substrate specificity" evidence="1">
    <location>
        <position position="79"/>
    </location>
</feature>
<feature type="site" description="Important for substrate specificity" evidence="1">
    <location>
        <position position="163"/>
    </location>
</feature>
<protein>
    <recommendedName>
        <fullName evidence="1">dTTP/UTP pyrophosphatase</fullName>
        <shortName evidence="1">dTTPase/UTPase</shortName>
        <ecNumber evidence="1">3.6.1.9</ecNumber>
    </recommendedName>
    <alternativeName>
        <fullName evidence="1">Nucleoside triphosphate pyrophosphatase</fullName>
    </alternativeName>
    <alternativeName>
        <fullName evidence="1">Nucleotide pyrophosphatase</fullName>
        <shortName evidence="1">Nucleotide PPase</shortName>
    </alternativeName>
</protein>
<dbReference type="EC" id="3.6.1.9" evidence="1"/>
<dbReference type="EMBL" id="AE001437">
    <property type="protein sequence ID" value="AAK79212.1"/>
    <property type="molecule type" value="Genomic_DNA"/>
</dbReference>
<dbReference type="PIR" id="A97053">
    <property type="entry name" value="A97053"/>
</dbReference>
<dbReference type="RefSeq" id="NP_347872.1">
    <property type="nucleotide sequence ID" value="NC_003030.1"/>
</dbReference>
<dbReference type="RefSeq" id="WP_010964553.1">
    <property type="nucleotide sequence ID" value="NC_003030.1"/>
</dbReference>
<dbReference type="SMR" id="Q97JN3"/>
<dbReference type="STRING" id="272562.CA_C1240"/>
<dbReference type="KEGG" id="cac:CA_C1240"/>
<dbReference type="PATRIC" id="fig|272562.8.peg.1440"/>
<dbReference type="eggNOG" id="COG0424">
    <property type="taxonomic scope" value="Bacteria"/>
</dbReference>
<dbReference type="HOGENOM" id="CLU_040416_0_0_9"/>
<dbReference type="OrthoDB" id="9807767at2"/>
<dbReference type="Proteomes" id="UP000000814">
    <property type="component" value="Chromosome"/>
</dbReference>
<dbReference type="GO" id="GO:0005737">
    <property type="term" value="C:cytoplasm"/>
    <property type="evidence" value="ECO:0007669"/>
    <property type="project" value="UniProtKB-SubCell"/>
</dbReference>
<dbReference type="GO" id="GO:0036218">
    <property type="term" value="F:dTTP diphosphatase activity"/>
    <property type="evidence" value="ECO:0007669"/>
    <property type="project" value="RHEA"/>
</dbReference>
<dbReference type="GO" id="GO:0036221">
    <property type="term" value="F:UTP diphosphatase activity"/>
    <property type="evidence" value="ECO:0007669"/>
    <property type="project" value="RHEA"/>
</dbReference>
<dbReference type="GO" id="GO:0009117">
    <property type="term" value="P:nucleotide metabolic process"/>
    <property type="evidence" value="ECO:0007669"/>
    <property type="project" value="UniProtKB-KW"/>
</dbReference>
<dbReference type="CDD" id="cd00555">
    <property type="entry name" value="Maf"/>
    <property type="match status" value="1"/>
</dbReference>
<dbReference type="Gene3D" id="3.90.950.10">
    <property type="match status" value="1"/>
</dbReference>
<dbReference type="HAMAP" id="MF_00528">
    <property type="entry name" value="Maf"/>
    <property type="match status" value="1"/>
</dbReference>
<dbReference type="InterPro" id="IPR029001">
    <property type="entry name" value="ITPase-like_fam"/>
</dbReference>
<dbReference type="InterPro" id="IPR003697">
    <property type="entry name" value="Maf-like"/>
</dbReference>
<dbReference type="NCBIfam" id="TIGR00172">
    <property type="entry name" value="maf"/>
    <property type="match status" value="1"/>
</dbReference>
<dbReference type="NCBIfam" id="NF000867">
    <property type="entry name" value="PRK00078.1"/>
    <property type="match status" value="1"/>
</dbReference>
<dbReference type="PANTHER" id="PTHR43213">
    <property type="entry name" value="BIFUNCTIONAL DTTP/UTP PYROPHOSPHATASE/METHYLTRANSFERASE PROTEIN-RELATED"/>
    <property type="match status" value="1"/>
</dbReference>
<dbReference type="PANTHER" id="PTHR43213:SF5">
    <property type="entry name" value="BIFUNCTIONAL DTTP_UTP PYROPHOSPHATASE_METHYLTRANSFERASE PROTEIN-RELATED"/>
    <property type="match status" value="1"/>
</dbReference>
<dbReference type="Pfam" id="PF02545">
    <property type="entry name" value="Maf"/>
    <property type="match status" value="1"/>
</dbReference>
<dbReference type="PIRSF" id="PIRSF006305">
    <property type="entry name" value="Maf"/>
    <property type="match status" value="1"/>
</dbReference>
<dbReference type="SUPFAM" id="SSF52972">
    <property type="entry name" value="ITPase-like"/>
    <property type="match status" value="1"/>
</dbReference>
<name>NTPPA_CLOAB</name>
<comment type="function">
    <text evidence="1">Nucleoside triphosphate pyrophosphatase that hydrolyzes dTTP and UTP. May have a dual role in cell division arrest and in preventing the incorporation of modified nucleotides into cellular nucleic acids.</text>
</comment>
<comment type="catalytic activity">
    <reaction evidence="1">
        <text>dTTP + H2O = dTMP + diphosphate + H(+)</text>
        <dbReference type="Rhea" id="RHEA:28534"/>
        <dbReference type="ChEBI" id="CHEBI:15377"/>
        <dbReference type="ChEBI" id="CHEBI:15378"/>
        <dbReference type="ChEBI" id="CHEBI:33019"/>
        <dbReference type="ChEBI" id="CHEBI:37568"/>
        <dbReference type="ChEBI" id="CHEBI:63528"/>
        <dbReference type="EC" id="3.6.1.9"/>
    </reaction>
</comment>
<comment type="catalytic activity">
    <reaction evidence="1">
        <text>UTP + H2O = UMP + diphosphate + H(+)</text>
        <dbReference type="Rhea" id="RHEA:29395"/>
        <dbReference type="ChEBI" id="CHEBI:15377"/>
        <dbReference type="ChEBI" id="CHEBI:15378"/>
        <dbReference type="ChEBI" id="CHEBI:33019"/>
        <dbReference type="ChEBI" id="CHEBI:46398"/>
        <dbReference type="ChEBI" id="CHEBI:57865"/>
        <dbReference type="EC" id="3.6.1.9"/>
    </reaction>
</comment>
<comment type="cofactor">
    <cofactor evidence="1">
        <name>a divalent metal cation</name>
        <dbReference type="ChEBI" id="CHEBI:60240"/>
    </cofactor>
</comment>
<comment type="subcellular location">
    <subcellularLocation>
        <location evidence="1">Cytoplasm</location>
    </subcellularLocation>
</comment>
<comment type="similarity">
    <text evidence="1">Belongs to the Maf family. YhdE subfamily.</text>
</comment>
<reference key="1">
    <citation type="journal article" date="2001" name="J. Bacteriol.">
        <title>Genome sequence and comparative analysis of the solvent-producing bacterium Clostridium acetobutylicum.</title>
        <authorList>
            <person name="Noelling J."/>
            <person name="Breton G."/>
            <person name="Omelchenko M.V."/>
            <person name="Makarova K.S."/>
            <person name="Zeng Q."/>
            <person name="Gibson R."/>
            <person name="Lee H.M."/>
            <person name="Dubois J."/>
            <person name="Qiu D."/>
            <person name="Hitti J."/>
            <person name="Wolf Y.I."/>
            <person name="Tatusov R.L."/>
            <person name="Sabathe F."/>
            <person name="Doucette-Stamm L.A."/>
            <person name="Soucaille P."/>
            <person name="Daly M.J."/>
            <person name="Bennett G.N."/>
            <person name="Koonin E.V."/>
            <person name="Smith D.R."/>
        </authorList>
    </citation>
    <scope>NUCLEOTIDE SEQUENCE [LARGE SCALE GENOMIC DNA]</scope>
    <source>
        <strain>ATCC 824 / DSM 792 / JCM 1419 / IAM 19013 / LMG 5710 / NBRC 13948 / NRRL B-527 / VKM B-1787 / 2291 / W</strain>
    </source>
</reference>
<organism>
    <name type="scientific">Clostridium acetobutylicum (strain ATCC 824 / DSM 792 / JCM 1419 / IAM 19013 / LMG 5710 / NBRC 13948 / NRRL B-527 / VKM B-1787 / 2291 / W)</name>
    <dbReference type="NCBI Taxonomy" id="272562"/>
    <lineage>
        <taxon>Bacteria</taxon>
        <taxon>Bacillati</taxon>
        <taxon>Bacillota</taxon>
        <taxon>Clostridia</taxon>
        <taxon>Eubacteriales</taxon>
        <taxon>Clostridiaceae</taxon>
        <taxon>Clostridium</taxon>
    </lineage>
</organism>
<accession>Q97JN3</accession>
<gene>
    <name type="ordered locus">CA_C1240</name>
</gene>
<evidence type="ECO:0000255" key="1">
    <source>
        <dbReference type="HAMAP-Rule" id="MF_00528"/>
    </source>
</evidence>